<keyword id="KW-0149">Chlorophyll biosynthesis</keyword>
<keyword id="KW-0963">Cytoplasm</keyword>
<keyword id="KW-0413">Isomerase</keyword>
<keyword id="KW-0627">Porphyrin biosynthesis</keyword>
<keyword id="KW-0663">Pyridoxal phosphate</keyword>
<keyword id="KW-1185">Reference proteome</keyword>
<reference key="1">
    <citation type="submission" date="2008-06" db="EMBL/GenBank/DDBJ databases">
        <title>Complete sequence of Pelodictyon phaeoclathratiforme BU-1.</title>
        <authorList>
            <consortium name="US DOE Joint Genome Institute"/>
            <person name="Lucas S."/>
            <person name="Copeland A."/>
            <person name="Lapidus A."/>
            <person name="Glavina del Rio T."/>
            <person name="Dalin E."/>
            <person name="Tice H."/>
            <person name="Bruce D."/>
            <person name="Goodwin L."/>
            <person name="Pitluck S."/>
            <person name="Schmutz J."/>
            <person name="Larimer F."/>
            <person name="Land M."/>
            <person name="Hauser L."/>
            <person name="Kyrpides N."/>
            <person name="Mikhailova N."/>
            <person name="Liu Z."/>
            <person name="Li T."/>
            <person name="Zhao F."/>
            <person name="Overmann J."/>
            <person name="Bryant D.A."/>
            <person name="Richardson P."/>
        </authorList>
    </citation>
    <scope>NUCLEOTIDE SEQUENCE [LARGE SCALE GENOMIC DNA]</scope>
    <source>
        <strain>DSM 5477 / BU-1</strain>
    </source>
</reference>
<proteinExistence type="inferred from homology"/>
<comment type="catalytic activity">
    <reaction evidence="1">
        <text>(S)-4-amino-5-oxopentanoate = 5-aminolevulinate</text>
        <dbReference type="Rhea" id="RHEA:14265"/>
        <dbReference type="ChEBI" id="CHEBI:57501"/>
        <dbReference type="ChEBI" id="CHEBI:356416"/>
        <dbReference type="EC" id="5.4.3.8"/>
    </reaction>
</comment>
<comment type="cofactor">
    <cofactor evidence="1">
        <name>pyridoxal 5'-phosphate</name>
        <dbReference type="ChEBI" id="CHEBI:597326"/>
    </cofactor>
</comment>
<comment type="pathway">
    <text evidence="1">Porphyrin-containing compound metabolism; protoporphyrin-IX biosynthesis; 5-aminolevulinate from L-glutamyl-tRNA(Glu): step 2/2.</text>
</comment>
<comment type="pathway">
    <text evidence="1">Porphyrin-containing compound metabolism; chlorophyll biosynthesis.</text>
</comment>
<comment type="subunit">
    <text evidence="1">Homodimer.</text>
</comment>
<comment type="subcellular location">
    <subcellularLocation>
        <location evidence="1">Cytoplasm</location>
    </subcellularLocation>
</comment>
<comment type="similarity">
    <text evidence="1">Belongs to the class-III pyridoxal-phosphate-dependent aminotransferase family. HemL subfamily.</text>
</comment>
<evidence type="ECO:0000255" key="1">
    <source>
        <dbReference type="HAMAP-Rule" id="MF_00375"/>
    </source>
</evidence>
<name>GSA_PELPB</name>
<accession>B4SGW1</accession>
<dbReference type="EC" id="5.4.3.8" evidence="1"/>
<dbReference type="EMBL" id="CP001110">
    <property type="protein sequence ID" value="ACF44949.1"/>
    <property type="molecule type" value="Genomic_DNA"/>
</dbReference>
<dbReference type="RefSeq" id="WP_012509417.1">
    <property type="nucleotide sequence ID" value="NC_011060.1"/>
</dbReference>
<dbReference type="SMR" id="B4SGW1"/>
<dbReference type="STRING" id="324925.Ppha_2800"/>
<dbReference type="KEGG" id="pph:Ppha_2800"/>
<dbReference type="eggNOG" id="COG0001">
    <property type="taxonomic scope" value="Bacteria"/>
</dbReference>
<dbReference type="HOGENOM" id="CLU_016922_1_5_10"/>
<dbReference type="OrthoDB" id="9807885at2"/>
<dbReference type="UniPathway" id="UPA00251">
    <property type="reaction ID" value="UER00317"/>
</dbReference>
<dbReference type="UniPathway" id="UPA00668"/>
<dbReference type="Proteomes" id="UP000002724">
    <property type="component" value="Chromosome"/>
</dbReference>
<dbReference type="GO" id="GO:0005737">
    <property type="term" value="C:cytoplasm"/>
    <property type="evidence" value="ECO:0007669"/>
    <property type="project" value="UniProtKB-SubCell"/>
</dbReference>
<dbReference type="GO" id="GO:0042286">
    <property type="term" value="F:glutamate-1-semialdehyde 2,1-aminomutase activity"/>
    <property type="evidence" value="ECO:0007669"/>
    <property type="project" value="UniProtKB-UniRule"/>
</dbReference>
<dbReference type="GO" id="GO:0030170">
    <property type="term" value="F:pyridoxal phosphate binding"/>
    <property type="evidence" value="ECO:0007669"/>
    <property type="project" value="InterPro"/>
</dbReference>
<dbReference type="GO" id="GO:0008483">
    <property type="term" value="F:transaminase activity"/>
    <property type="evidence" value="ECO:0007669"/>
    <property type="project" value="InterPro"/>
</dbReference>
<dbReference type="GO" id="GO:0015995">
    <property type="term" value="P:chlorophyll biosynthetic process"/>
    <property type="evidence" value="ECO:0007669"/>
    <property type="project" value="UniProtKB-UniRule"/>
</dbReference>
<dbReference type="GO" id="GO:0006782">
    <property type="term" value="P:protoporphyrinogen IX biosynthetic process"/>
    <property type="evidence" value="ECO:0007669"/>
    <property type="project" value="UniProtKB-UniRule"/>
</dbReference>
<dbReference type="CDD" id="cd00610">
    <property type="entry name" value="OAT_like"/>
    <property type="match status" value="1"/>
</dbReference>
<dbReference type="FunFam" id="3.40.640.10:FF:000021">
    <property type="entry name" value="Glutamate-1-semialdehyde 2,1-aminomutase"/>
    <property type="match status" value="1"/>
</dbReference>
<dbReference type="Gene3D" id="3.90.1150.10">
    <property type="entry name" value="Aspartate Aminotransferase, domain 1"/>
    <property type="match status" value="1"/>
</dbReference>
<dbReference type="Gene3D" id="3.40.640.10">
    <property type="entry name" value="Type I PLP-dependent aspartate aminotransferase-like (Major domain)"/>
    <property type="match status" value="1"/>
</dbReference>
<dbReference type="HAMAP" id="MF_00375">
    <property type="entry name" value="HemL_aminotrans_3"/>
    <property type="match status" value="1"/>
</dbReference>
<dbReference type="InterPro" id="IPR004639">
    <property type="entry name" value="4pyrrol_synth_GluAld_NH2Trfase"/>
</dbReference>
<dbReference type="InterPro" id="IPR005814">
    <property type="entry name" value="Aminotrans_3"/>
</dbReference>
<dbReference type="InterPro" id="IPR049704">
    <property type="entry name" value="Aminotrans_3_PPA_site"/>
</dbReference>
<dbReference type="InterPro" id="IPR015424">
    <property type="entry name" value="PyrdxlP-dep_Trfase"/>
</dbReference>
<dbReference type="InterPro" id="IPR015421">
    <property type="entry name" value="PyrdxlP-dep_Trfase_major"/>
</dbReference>
<dbReference type="InterPro" id="IPR015422">
    <property type="entry name" value="PyrdxlP-dep_Trfase_small"/>
</dbReference>
<dbReference type="NCBIfam" id="TIGR00713">
    <property type="entry name" value="hemL"/>
    <property type="match status" value="1"/>
</dbReference>
<dbReference type="NCBIfam" id="NF000818">
    <property type="entry name" value="PRK00062.1"/>
    <property type="match status" value="1"/>
</dbReference>
<dbReference type="PANTHER" id="PTHR43713">
    <property type="entry name" value="GLUTAMATE-1-SEMIALDEHYDE 2,1-AMINOMUTASE"/>
    <property type="match status" value="1"/>
</dbReference>
<dbReference type="PANTHER" id="PTHR43713:SF3">
    <property type="entry name" value="GLUTAMATE-1-SEMIALDEHYDE 2,1-AMINOMUTASE 1, CHLOROPLASTIC-RELATED"/>
    <property type="match status" value="1"/>
</dbReference>
<dbReference type="Pfam" id="PF00202">
    <property type="entry name" value="Aminotran_3"/>
    <property type="match status" value="1"/>
</dbReference>
<dbReference type="SUPFAM" id="SSF53383">
    <property type="entry name" value="PLP-dependent transferases"/>
    <property type="match status" value="1"/>
</dbReference>
<dbReference type="PROSITE" id="PS00600">
    <property type="entry name" value="AA_TRANSFER_CLASS_3"/>
    <property type="match status" value="1"/>
</dbReference>
<gene>
    <name evidence="1" type="primary">hemL</name>
    <name type="ordered locus">Ppha_2800</name>
</gene>
<sequence length="431" mass="46146">MPQLTKSAELFEKAKKFIPGGVNSPVRAFKSVGGTPVYMAKGSGAYMTDVDGNTYLDYVGSWGPFILGSMHPRITAALEYTLKNIGTSFGTPIEMEIEIAELLCKIVPSLEMVRMVNSGTEATMSAVRLARGYTGRDKIIKFEGCYHGHGDSFLIKAGSGALTLGAPDSPGVTKGTAMDTLNATYNDIDSVKLLVNENKGQIAAIIIEPVAGNTGVIPAKPGFLAALRELCTEEGIVLIFDEVMCGFRVALGGAQSLYGVTPDLTTMGKIIGGGLPVGAFGGKREIMERVAPLGDVYQAGTLSGNPLALTAGLETLKILIDENPYPELERKAVILESGFNDNLKKLGLNYVQNRVGSMSCLFFTETPVVDYSTAVTADTKRHGKYFHSMLDQGIYLAPSQFEAMFISFMHTDEDLEKTIKANYNALVASGQ</sequence>
<organism>
    <name type="scientific">Pelodictyon phaeoclathratiforme (strain DSM 5477 / BU-1)</name>
    <dbReference type="NCBI Taxonomy" id="324925"/>
    <lineage>
        <taxon>Bacteria</taxon>
        <taxon>Pseudomonadati</taxon>
        <taxon>Chlorobiota</taxon>
        <taxon>Chlorobiia</taxon>
        <taxon>Chlorobiales</taxon>
        <taxon>Chlorobiaceae</taxon>
        <taxon>Chlorobium/Pelodictyon group</taxon>
        <taxon>Pelodictyon</taxon>
    </lineage>
</organism>
<feature type="chain" id="PRO_1000121906" description="Glutamate-1-semialdehyde 2,1-aminomutase">
    <location>
        <begin position="1"/>
        <end position="431"/>
    </location>
</feature>
<feature type="modified residue" description="N6-(pyridoxal phosphate)lysine" evidence="1">
    <location>
        <position position="269"/>
    </location>
</feature>
<protein>
    <recommendedName>
        <fullName evidence="1">Glutamate-1-semialdehyde 2,1-aminomutase</fullName>
        <shortName evidence="1">GSA</shortName>
        <ecNumber evidence="1">5.4.3.8</ecNumber>
    </recommendedName>
    <alternativeName>
        <fullName evidence="1">Glutamate-1-semialdehyde aminotransferase</fullName>
        <shortName evidence="1">GSA-AT</shortName>
    </alternativeName>
</protein>